<dbReference type="EMBL" id="J02179">
    <property type="protein sequence ID" value="AAA43611.1"/>
    <property type="molecule type" value="Genomic_RNA"/>
</dbReference>
<dbReference type="SMR" id="P03427"/>
<dbReference type="IntAct" id="P03427">
    <property type="interactions" value="263"/>
</dbReference>
<dbReference type="MINT" id="P03427"/>
<dbReference type="PRO" id="PR:P03427"/>
<dbReference type="Proteomes" id="UP000000834">
    <property type="component" value="Genome"/>
</dbReference>
<dbReference type="GO" id="GO:0033650">
    <property type="term" value="C:host cell mitochondrion"/>
    <property type="evidence" value="ECO:0000314"/>
    <property type="project" value="CACAO"/>
</dbReference>
<dbReference type="GO" id="GO:0042025">
    <property type="term" value="C:host cell nucleus"/>
    <property type="evidence" value="ECO:0000314"/>
    <property type="project" value="UniProtKB"/>
</dbReference>
<dbReference type="GO" id="GO:0044423">
    <property type="term" value="C:virion component"/>
    <property type="evidence" value="ECO:0007669"/>
    <property type="project" value="UniProtKB-UniRule"/>
</dbReference>
<dbReference type="GO" id="GO:0003723">
    <property type="term" value="F:RNA binding"/>
    <property type="evidence" value="ECO:0007669"/>
    <property type="project" value="UniProtKB-UniRule"/>
</dbReference>
<dbReference type="GO" id="GO:0003968">
    <property type="term" value="F:RNA-directed RNA polymerase activity"/>
    <property type="evidence" value="ECO:0007669"/>
    <property type="project" value="UniProtKB-UniRule"/>
</dbReference>
<dbReference type="GO" id="GO:0006370">
    <property type="term" value="P:7-methylguanosine mRNA capping"/>
    <property type="evidence" value="ECO:0007669"/>
    <property type="project" value="UniProtKB-UniRule"/>
</dbReference>
<dbReference type="GO" id="GO:0075526">
    <property type="term" value="P:cap snatching"/>
    <property type="evidence" value="ECO:0007669"/>
    <property type="project" value="UniProtKB-UniRule"/>
</dbReference>
<dbReference type="GO" id="GO:0006351">
    <property type="term" value="P:DNA-templated transcription"/>
    <property type="evidence" value="ECO:0007669"/>
    <property type="project" value="UniProtKB-UniRule"/>
</dbReference>
<dbReference type="GO" id="GO:0039689">
    <property type="term" value="P:negative stranded viral RNA replication"/>
    <property type="evidence" value="ECO:0000314"/>
    <property type="project" value="UniProtKB"/>
</dbReference>
<dbReference type="GO" id="GO:0039545">
    <property type="term" value="P:symbiont-mediated suppression of host cytoplasmic pattern recognition receptor signaling pathway via inhibition of MAVS activity"/>
    <property type="evidence" value="ECO:0007669"/>
    <property type="project" value="UniProtKB-UniRule"/>
</dbReference>
<dbReference type="GO" id="GO:0039657">
    <property type="term" value="P:symbiont-mediated suppression of host gene expression"/>
    <property type="evidence" value="ECO:0007669"/>
    <property type="project" value="UniProtKB-KW"/>
</dbReference>
<dbReference type="GO" id="GO:0039523">
    <property type="term" value="P:symbiont-mediated suppression of host mRNA transcription via inhibition of RNA polymerase II activity"/>
    <property type="evidence" value="ECO:0007669"/>
    <property type="project" value="UniProtKB-UniRule"/>
</dbReference>
<dbReference type="FunFam" id="3.30.30.90:FF:000001">
    <property type="entry name" value="Polymerase basic protein 2"/>
    <property type="match status" value="1"/>
</dbReference>
<dbReference type="Gene3D" id="3.30.30.90">
    <property type="entry name" value="Polymerase Basic Protein 2, C-terminal domain"/>
    <property type="match status" value="1"/>
</dbReference>
<dbReference type="HAMAP" id="MF_04062">
    <property type="entry name" value="INV_PB2"/>
    <property type="match status" value="1"/>
</dbReference>
<dbReference type="InterPro" id="IPR049110">
    <property type="entry name" value="Flu_PB2_2nd"/>
</dbReference>
<dbReference type="InterPro" id="IPR049114">
    <property type="entry name" value="Flu_PB2_6th"/>
</dbReference>
<dbReference type="InterPro" id="IPR049115">
    <property type="entry name" value="Flu_PB2_C"/>
</dbReference>
<dbReference type="InterPro" id="IPR048298">
    <property type="entry name" value="Flu_PB2_CAP-bd"/>
</dbReference>
<dbReference type="InterPro" id="IPR049111">
    <property type="entry name" value="Flu_PB2_middle"/>
</dbReference>
<dbReference type="InterPro" id="IPR049106">
    <property type="entry name" value="Flu_PB2_N"/>
</dbReference>
<dbReference type="InterPro" id="IPR001591">
    <property type="entry name" value="INV_PB2"/>
</dbReference>
<dbReference type="InterPro" id="IPR049113">
    <property type="entry name" value="PB2_helical"/>
</dbReference>
<dbReference type="InterPro" id="IPR037258">
    <property type="entry name" value="PDB2_C"/>
</dbReference>
<dbReference type="Pfam" id="PF20947">
    <property type="entry name" value="Flu_PB2_1st"/>
    <property type="match status" value="1"/>
</dbReference>
<dbReference type="Pfam" id="PF20948">
    <property type="entry name" value="Flu_PB2_2nd"/>
    <property type="match status" value="1"/>
</dbReference>
<dbReference type="Pfam" id="PF20949">
    <property type="entry name" value="Flu_PB2_3rd"/>
    <property type="match status" value="1"/>
</dbReference>
<dbReference type="Pfam" id="PF20950">
    <property type="entry name" value="Flu_PB2_4th"/>
    <property type="match status" value="1"/>
</dbReference>
<dbReference type="Pfam" id="PF00604">
    <property type="entry name" value="Flu_PB2_5th"/>
    <property type="match status" value="1"/>
</dbReference>
<dbReference type="Pfam" id="PF20951">
    <property type="entry name" value="Flu_PB2_6th"/>
    <property type="match status" value="1"/>
</dbReference>
<dbReference type="Pfam" id="PF20952">
    <property type="entry name" value="Flu_PB2_7th"/>
    <property type="match status" value="1"/>
</dbReference>
<dbReference type="SUPFAM" id="SSF160453">
    <property type="entry name" value="PB2 C-terminal domain-like"/>
    <property type="match status" value="1"/>
</dbReference>
<evidence type="ECO:0000255" key="1">
    <source>
        <dbReference type="HAMAP-Rule" id="MF_04062"/>
    </source>
</evidence>
<evidence type="ECO:0000269" key="2">
    <source>
    </source>
</evidence>
<evidence type="ECO:0000269" key="3">
    <source>
    </source>
</evidence>
<evidence type="ECO:0000269" key="4">
    <source>
    </source>
</evidence>
<evidence type="ECO:0000269" key="5">
    <source>
    </source>
</evidence>
<evidence type="ECO:0000269" key="6">
    <source>
    </source>
</evidence>
<evidence type="ECO:0000303" key="7">
    <source>
    </source>
</evidence>
<evidence type="ECO:0000305" key="8"/>
<organism>
    <name type="scientific">Influenza A virus (strain A/Wilson-Smith/1933 H1N1)</name>
    <name type="common">Influenza A virus (strain A/WS/1933 H1N1)</name>
    <dbReference type="NCBI Taxonomy" id="381518"/>
    <lineage>
        <taxon>Viruses</taxon>
        <taxon>Riboviria</taxon>
        <taxon>Orthornavirae</taxon>
        <taxon>Negarnaviricota</taxon>
        <taxon>Polyploviricotina</taxon>
        <taxon>Insthoviricetes</taxon>
        <taxon>Articulavirales</taxon>
        <taxon>Orthomyxoviridae</taxon>
        <taxon>Alphainfluenzavirus</taxon>
        <taxon>Alphainfluenzavirus influenzae</taxon>
        <taxon>Influenza A virus</taxon>
    </lineage>
</organism>
<proteinExistence type="evidence at protein level"/>
<protein>
    <recommendedName>
        <fullName evidence="1">Polymerase basic protein 2</fullName>
    </recommendedName>
    <alternativeName>
        <fullName evidence="1">RNA-directed RNA polymerase subunit P3</fullName>
    </alternativeName>
</protein>
<comment type="function">
    <text evidence="1 6">Plays an essential role in transcription initiation and cap-stealing mechanism, in which cellular capped pre-mRNAs are used to generate primers for viral transcription. Recognizes and binds the 7-methylguanosine-containing cap of the target pre-RNA which is subsequently cleaved after 10-13 nucleotides by the viral protein PA. Plays a role in the initiation of the viral genome replication and modulates the activity of the ribonucleoprotein (RNP) complex. In addition, participates in the inhibition of type I interferon induction through interaction with and inhibition of the host mitochondrial antiviral signaling protein MAVS.</text>
</comment>
<comment type="subunit">
    <text evidence="1 3 6">Influenza RNA polymerase is composed of three subunits: PB1, PB2 and PA. Interacts (via N-terminus) with PB1 (via C-terminus). Interacts with nucleoprotein NP (via N-terminus). Interacts (via N-terminus) with host MAVS (via N-terminus); this interaction inhibits host innate immune response. Interacts with host ANP32A (via C-terminus); this interaction promotes viral RNA synthesis.</text>
</comment>
<comment type="interaction">
    <interactant intactId="EBI-8430745">
        <id>P03427</id>
    </interactant>
    <interactant intactId="EBI-8431752">
        <id>P15659</id>
        <label>PA</label>
    </interactant>
    <organismsDiffer>false</organismsDiffer>
    <experiments>3</experiments>
</comment>
<comment type="interaction">
    <interactant intactId="EBI-8430745">
        <id>P03427</id>
    </interactant>
    <interactant intactId="EBI-8434155">
        <id>P03430</id>
        <label>PB1</label>
    </interactant>
    <organismsDiffer>false</organismsDiffer>
    <experiments>3</experiments>
</comment>
<comment type="interaction">
    <interactant intactId="EBI-8430745">
        <id>P03427</id>
    </interactant>
    <interactant intactId="EBI-353779">
        <id>O00571</id>
        <label>DDX3X</label>
    </interactant>
    <organismsDiffer>true</organismsDiffer>
    <experiments>3</experiments>
</comment>
<comment type="interaction">
    <interactant intactId="EBI-8430745">
        <id>P03427</id>
    </interactant>
    <interactant intactId="EBI-358297">
        <id>O00505</id>
        <label>KPNA3</label>
    </interactant>
    <organismsDiffer>true</organismsDiffer>
    <experiments>3</experiments>
</comment>
<comment type="interaction">
    <interactant intactId="EBI-8430745">
        <id>P03427</id>
    </interactant>
    <interactant intactId="EBI-78579">
        <id>P06748</id>
        <label>NPM1</label>
    </interactant>
    <organismsDiffer>true</organismsDiffer>
    <experiments>3</experiments>
</comment>
<comment type="interaction">
    <interactant intactId="EBI-8430745">
        <id>P03427</id>
    </interactant>
    <interactant intactId="EBI-359097">
        <id>P49411</id>
        <label>TUFM</label>
    </interactant>
    <organismsDiffer>true</organismsDiffer>
    <experiments>9</experiments>
</comment>
<comment type="subcellular location">
    <subcellularLocation>
        <location evidence="1">Virion</location>
    </subcellularLocation>
    <subcellularLocation>
        <location evidence="1">Host nucleus</location>
    </subcellularLocation>
    <subcellularLocation>
        <location evidence="1 4 5">Host mitochondrion</location>
    </subcellularLocation>
</comment>
<comment type="alternative products">
    <event type="alternative splicing"/>
    <isoform>
        <id>P03427-1</id>
        <name>Polymerase basic protein 2</name>
        <sequence type="displayed"/>
    </isoform>
    <isoform>
        <id>P0DOG3-1</id>
        <name evidence="7">PB2-S1</name>
        <sequence type="external"/>
    </isoform>
</comment>
<comment type="similarity">
    <text evidence="1 8">Belongs to the influenza viruses PB2 family.</text>
</comment>
<name>PB2_I33A0</name>
<gene>
    <name evidence="1" type="primary">PB2</name>
</gene>
<keyword id="KW-0025">Alternative splicing</keyword>
<keyword id="KW-1157">Cap snatching</keyword>
<keyword id="KW-1262">Eukaryotic host gene expression shutoff by virus</keyword>
<keyword id="KW-1191">Eukaryotic host transcription shutoff by virus</keyword>
<keyword id="KW-1190">Host gene expression shutoff by virus</keyword>
<keyword id="KW-1045">Host mitochondrion</keyword>
<keyword id="KW-1048">Host nucleus</keyword>
<keyword id="KW-0945">Host-virus interaction</keyword>
<keyword id="KW-1090">Inhibition of host innate immune response by virus</keyword>
<keyword id="KW-1097">Inhibition of host MAVS by virus</keyword>
<keyword id="KW-1113">Inhibition of host RLR pathway by virus</keyword>
<keyword id="KW-1104">Inhibition of host RNA polymerase II by virus</keyword>
<keyword id="KW-0506">mRNA capping</keyword>
<keyword id="KW-0507">mRNA processing</keyword>
<keyword id="KW-0899">Viral immunoevasion</keyword>
<keyword id="KW-1195">Viral transcription</keyword>
<keyword id="KW-0946">Virion</keyword>
<organismHost>
    <name type="scientific">Aves</name>
    <dbReference type="NCBI Taxonomy" id="8782"/>
</organismHost>
<organismHost>
    <name type="scientific">Homo sapiens</name>
    <name type="common">Human</name>
    <dbReference type="NCBI Taxonomy" id="9606"/>
</organismHost>
<organismHost>
    <name type="scientific">Sus scrofa</name>
    <name type="common">Pig</name>
    <dbReference type="NCBI Taxonomy" id="9823"/>
</organismHost>
<feature type="chain" id="PRO_0000078841" description="Polymerase basic protein 2">
    <location>
        <begin position="1"/>
        <end position="759"/>
    </location>
</feature>
<feature type="short sequence motif" description="Nuclear localization signal" evidence="1">
    <location>
        <begin position="736"/>
        <end position="739"/>
    </location>
</feature>
<feature type="site" description="Mammalian adaptation" evidence="1">
    <location>
        <position position="627"/>
    </location>
</feature>
<feature type="mutagenesis site" description="Complete loss of mitochondrial localization." evidence="4">
    <original>L</original>
    <variation>A</variation>
    <location>
        <position position="7"/>
    </location>
</feature>
<feature type="mutagenesis site" description="Complete loss of mitochondrial localization." evidence="4">
    <original>L</original>
    <variation>A</variation>
    <location>
        <position position="10"/>
    </location>
</feature>
<feature type="mutagenesis site" description="Partial loss of replication. No effect on transcription." evidence="2">
    <original>W</original>
    <variation>A</variation>
    <location>
        <position position="49"/>
    </location>
</feature>
<feature type="mutagenesis site" description="Complete loss of protein expression." evidence="2">
    <original>W</original>
    <variation>A</variation>
    <location>
        <position position="78"/>
    </location>
</feature>
<feature type="mutagenesis site" description="Complete loss of replication. No effect on transcription." evidence="2">
    <original>F</original>
    <variation>A</variation>
    <location>
        <position position="130"/>
    </location>
</feature>
<feature type="mutagenesis site" description="Enhances viral replication." evidence="2">
    <original>F</original>
    <variation>Y</variation>
    <location>
        <position position="130"/>
    </location>
</feature>
<feature type="mutagenesis site" description="Partial loss of replication. No effect on transcription." evidence="2">
    <original>R</original>
    <variation>A</variation>
    <location>
        <position position="142"/>
    </location>
</feature>
<feature type="mutagenesis site" description="Partial loss of replication. No effect on transcription." evidence="2">
    <original>R</original>
    <variation>K</variation>
    <location>
        <position position="142"/>
    </location>
</feature>
<feature type="mutagenesis site" description="No effect on replication or transcription." evidence="2">
    <original>K</original>
    <variation>A</variation>
    <location>
        <position position="190"/>
    </location>
</feature>
<feature type="mutagenesis site" description="Loss of interaction with ANP32A." evidence="6">
    <original>Q</original>
    <variation>A</variation>
    <location>
        <position position="447"/>
    </location>
</feature>
<feature type="mutagenesis site" description="Loss of interaction with ANP32A." evidence="6">
    <original>G</original>
    <variation>A</variation>
    <location>
        <position position="450"/>
    </location>
</feature>
<feature type="mutagenesis site" description="Partial loss of nuclear localization." evidence="5">
    <original>K</original>
    <variation>Q</variation>
    <location>
        <position position="736"/>
    </location>
</feature>
<feature type="mutagenesis site" description="Complete loss of nuclear localization." evidence="5">
    <original>R</original>
    <variation>Q</variation>
    <location>
        <position position="737"/>
    </location>
</feature>
<feature type="mutagenesis site" description="Complete loss of nuclear localization." evidence="5">
    <original>K</original>
    <variation>Q</variation>
    <location>
        <position position="738"/>
    </location>
</feature>
<feature type="mutagenesis site" description="Partial loss of nuclear localization." evidence="5">
    <original>R</original>
    <variation>Q</variation>
    <location>
        <position position="739"/>
    </location>
</feature>
<sequence length="759" mass="85796">MERIKELRNLMSQSRTREILTKTTVDHMAIIKKYTSGRQEKNPALRMKWMMAMKYPITADKRITEMIPERNEQGQTLWSKMNDAGSDRVMVSPLAVTWWNRNGPVTSTVHYPKIYKTYFEKVERLKHGTFGPVHFRNQVKIRRRVDINPGHADLSAKEAQDVIMEVVFPNEVGARILTSESQLTTTKEKKEELQGCKISPLMVAYMLERELVRKTRFLPVAGGTSSVYIEVLHLTQGTCWEQMYTPGGEARNDDVDQSLIIAARNIVRRATVSADPLASLLEMCHSTQIGGIRMVNILRQNPTEEQAVDICKAAMGLRISSSFSFGGFTFKRTSGSSVKREEEVLTGNLQTLKIRVHEGYEEFTMVGRRATAILRKATRRLIQLIVSGRDEQSIAEAIIVAMVFSQEDCMIKAVRGDLNFVNRANQRLNPMHQLLRHFQKDAKALFQNWGIESIDNVMGMIGILPDMTPSTEMSMRGVRISKMGVDEYSSAEKIVVSIDRFLRVRDQRGNVLLSPEEVSETQGTEKLTITYSSSMMWEINGPESVLVNTYQWIIRNWETVKIQWSQNPTMLYNKMEFEPFQSLVPKAVRGQYSGFVRTLFQQMRDVLGTFDTAQIIKLLPFAAAPPKQSGMQFSSLTINVRGSGMRILVRGNSPIFNYNKTTKRLTVLGKDAGPLTEDPDEGTAGVESAVLRGFLILGKEDRRYGPALSINELSNLAKGEKANVLIGQGDVVLVMKRKRNSSILTDSQTATKRIRMAIN</sequence>
<reference key="1">
    <citation type="journal article" date="1982" name="J. Virol.">
        <title>Complete nucleotide sequence of the polymerase 3 gene of human influenza virus A/WSN/33.</title>
        <authorList>
            <person name="Kaptein J.S."/>
            <person name="Nayak D.P."/>
        </authorList>
    </citation>
    <scope>NUCLEOTIDE SEQUENCE [GENOMIC RNA]</scope>
</reference>
<reference key="2">
    <citation type="journal article" date="1991" name="J. Virol.">
        <title>Two signals mediate nuclear localization of influenza virus (A/WSN/33) polymerase basic protein 2.</title>
        <authorList>
            <person name="Mukaigawa J."/>
            <person name="Nayak D.P."/>
        </authorList>
    </citation>
    <scope>SUBCELLULAR LOCATION</scope>
    <scope>MUTAGENESIS OF LYS-736; ARG-737; LYS-738 AND ARG-739</scope>
</reference>
<reference key="3">
    <citation type="journal article" date="2003" name="J. Virol.">
        <title>Mutations in the N-terminal region of influenza virus PB2 protein affect virus RNA replication but not transcription.</title>
        <authorList>
            <person name="Gastaminza P."/>
            <person name="Perales B."/>
            <person name="Falcon A.M."/>
            <person name="Ortin J."/>
        </authorList>
    </citation>
    <scope>MUTAGENESIS OF TRP-49; TRP-78; PHE-130; ARG-142 AND LYS-190</scope>
</reference>
<reference key="4">
    <citation type="journal article" date="2004" name="Virology">
        <title>Functional domains of the influenza A virus PB2 protein: identification of NP- and PB1-binding sites.</title>
        <authorList>
            <person name="Poole E."/>
            <person name="Elton D."/>
            <person name="Medcalf L."/>
            <person name="Digard P."/>
        </authorList>
    </citation>
    <scope>FUNCTION</scope>
    <scope>INTERACTION WITH PB1 AND NP</scope>
</reference>
<reference key="5">
    <citation type="journal article" date="2006" name="Virology">
        <title>Characterization of a mitochondrial-targeting signal in the PB2 protein of influenza viruses.</title>
        <authorList>
            <person name="Carr S.M."/>
            <person name="Carnero E."/>
            <person name="Garcia-Sastre A."/>
            <person name="Brownlee G.G."/>
            <person name="Fodor E."/>
        </authorList>
    </citation>
    <scope>SUBCELLULAR LOCATION</scope>
    <scope>MUTAGENESIS OF LEU-7 AND LEU-10</scope>
</reference>
<reference key="6">
    <citation type="journal article" date="2015" name="J. Virol.">
        <title>Identification of a novel viral protein expressed from the PB2 segment of Influenza A virus.</title>
        <authorList>
            <person name="Yamayoshi S."/>
            <person name="Watanabe M."/>
            <person name="Goto H."/>
            <person name="Kawaoka Y."/>
        </authorList>
    </citation>
    <scope>ALTERNATIVE SPLICING (PB2-S1)</scope>
</reference>
<reference key="7">
    <citation type="journal article" date="2019" name="Arch. Virol.">
        <title>The interaction of cellular protein ANP32A with influenza A virus polymerase component PB2 promotes vRNA synthesis.</title>
        <authorList>
            <person name="Wei X."/>
            <person name="Liu Z."/>
            <person name="Wang J."/>
            <person name="Yang R."/>
            <person name="Yang J."/>
            <person name="Guo Y."/>
            <person name="Tan H."/>
            <person name="Chen H."/>
            <person name="Liu Q."/>
            <person name="Liu L."/>
        </authorList>
    </citation>
    <scope>FUNCTION</scope>
    <scope>INTERACTION WITH HOST ANP32A</scope>
    <scope>MUTAGENESIS OF GLN-447 AND GLY-450</scope>
</reference>
<accession>P03427</accession>